<reference key="1">
    <citation type="journal article" date="1993" name="Nature">
        <title>Potential virulence determinants in terminal regions of variola smallpox virus genome.</title>
        <authorList>
            <person name="Massung R.F."/>
            <person name="Esposito J.J."/>
            <person name="Liu L.I."/>
            <person name="Qi J."/>
            <person name="Utterback T.R."/>
            <person name="Knight J.C."/>
            <person name="Aubin L."/>
            <person name="Yuran T.E."/>
            <person name="Parsons J.M."/>
            <person name="Loparev V.N."/>
            <person name="Selivanov N.A."/>
            <person name="Cavallaro K.F."/>
            <person name="Kerlavage A.R."/>
            <person name="Mahy B.W.J."/>
            <person name="Venter J.C."/>
        </authorList>
    </citation>
    <scope>NUCLEOTIDE SEQUENCE [GENOMIC DNA]</scope>
    <source>
        <strain>Bangladesh-1975</strain>
    </source>
</reference>
<reference key="2">
    <citation type="submission" date="1994-12" db="EMBL/GenBank/DDBJ databases">
        <authorList>
            <person name="Massung R.F."/>
            <person name="Loparev V.N."/>
            <person name="Knight J.C."/>
            <person name="Chizhikov V.E."/>
            <person name="Parsons J.M."/>
            <person name="Totmenin A.V."/>
            <person name="Shchelkunov S.N."/>
            <person name="Esposito J.J."/>
        </authorList>
    </citation>
    <scope>NUCLEOTIDE SEQUENCE [GENOMIC DNA]</scope>
    <source>
        <strain>Garcia-1966</strain>
        <strain>Somalia-1977</strain>
    </source>
</reference>
<comment type="similarity">
    <text evidence="1">Belongs to the orthopoxvirus B17 protein family.</text>
</comment>
<sequence length="340" mass="39673">MSRKFMQVYEYDREQYLDEFIEDRYNDSFIASPEYYSAEKYMCRYTILNHNCVNVRRCALDSKLLHDIITNCKIYNNIELVRATKFVYYLDLIKCNWVSKVGDSVLYPVIFITHTSTRNLDKVSVKTYKGVKVKKLNRCADHAIVINPFVKFKLTLPNKTSHAKVLVTFCKLRTDIMPIEAPYPGNVLVYTFPDIHKRIPGYIHINIEGCIDGIIYINSSKFSCVLKLHRSMYRIPPFPIDICSCCSQYTNDDIEIPIHDLIKDVVIFKNKEMVYYLKLNNKTIARFTYFNNIDTAITQEHKYVKIALGIVCKLMINNMHSIVGVNHSNTFVNCLLEDNV</sequence>
<organism>
    <name type="scientific">Variola virus</name>
    <dbReference type="NCBI Taxonomy" id="10255"/>
    <lineage>
        <taxon>Viruses</taxon>
        <taxon>Varidnaviria</taxon>
        <taxon>Bamfordvirae</taxon>
        <taxon>Nucleocytoviricota</taxon>
        <taxon>Pokkesviricetes</taxon>
        <taxon>Chitovirales</taxon>
        <taxon>Poxviridae</taxon>
        <taxon>Chordopoxvirinae</taxon>
        <taxon>Orthopoxvirus</taxon>
    </lineage>
</organism>
<dbReference type="EMBL" id="X72086">
    <property type="protein sequence ID" value="CAA50968.1"/>
    <property type="molecule type" value="Genomic_DNA"/>
</dbReference>
<dbReference type="EMBL" id="L22579">
    <property type="protein sequence ID" value="AAA60924.1"/>
    <property type="molecule type" value="Genomic_DNA"/>
</dbReference>
<dbReference type="EMBL" id="U18339">
    <property type="protein sequence ID" value="AAA69397.1"/>
    <property type="molecule type" value="Genomic_DNA"/>
</dbReference>
<dbReference type="EMBL" id="U18341">
    <property type="protein sequence ID" value="AAA69457.1"/>
    <property type="molecule type" value="Genomic_DNA"/>
</dbReference>
<dbReference type="PIR" id="B72174">
    <property type="entry name" value="B72174"/>
</dbReference>
<dbReference type="PIR" id="T28614">
    <property type="entry name" value="T28614"/>
</dbReference>
<dbReference type="RefSeq" id="NP_042230.1">
    <property type="nucleotide sequence ID" value="NC_001611.1"/>
</dbReference>
<dbReference type="GeneID" id="1486548"/>
<dbReference type="KEGG" id="vg:1486548"/>
<dbReference type="Proteomes" id="UP000119805">
    <property type="component" value="Segment"/>
</dbReference>
<dbReference type="Proteomes" id="UP000181107">
    <property type="component" value="Genome"/>
</dbReference>
<dbReference type="InterPro" id="IPR009633">
    <property type="entry name" value="Vaccinia_virus_B17"/>
</dbReference>
<dbReference type="Pfam" id="PF06802">
    <property type="entry name" value="DUF1231"/>
    <property type="match status" value="1"/>
</dbReference>
<organismHost>
    <name type="scientific">Homo sapiens</name>
    <name type="common">Human</name>
    <dbReference type="NCBI Taxonomy" id="9606"/>
</organismHost>
<name>B17_VARV</name>
<proteinExistence type="inferred from homology"/>
<protein>
    <recommendedName>
        <fullName>Protein B17</fullName>
    </recommendedName>
</protein>
<gene>
    <name type="ORF">B15L</name>
    <name type="ORF">B17L</name>
    <name type="ORF">B18L</name>
</gene>
<feature type="chain" id="PRO_0000448171" description="Protein B17">
    <location>
        <begin position="1"/>
        <end position="340"/>
    </location>
</feature>
<evidence type="ECO:0000305" key="1"/>
<accession>P0DOT2</accession>
<accession>P33878</accession>